<sequence length="36" mass="4168">MLTLKLFVYTVVIFFVSLFIFGFLSNDPGRNPGREE</sequence>
<keyword id="KW-0150">Chloroplast</keyword>
<keyword id="KW-0472">Membrane</keyword>
<keyword id="KW-0602">Photosynthesis</keyword>
<keyword id="KW-0604">Photosystem II</keyword>
<keyword id="KW-0934">Plastid</keyword>
<keyword id="KW-0674">Reaction center</keyword>
<keyword id="KW-0793">Thylakoid</keyword>
<keyword id="KW-0812">Transmembrane</keyword>
<keyword id="KW-1133">Transmembrane helix</keyword>
<gene>
    <name evidence="1" type="primary">psbI</name>
    <name type="ORF">PSC0091</name>
</gene>
<proteinExistence type="inferred from homology"/>
<evidence type="ECO:0000255" key="1">
    <source>
        <dbReference type="HAMAP-Rule" id="MF_01316"/>
    </source>
</evidence>
<protein>
    <recommendedName>
        <fullName evidence="1">Photosystem II reaction center protein I</fullName>
        <shortName evidence="1">PSII-I</shortName>
    </recommendedName>
    <alternativeName>
        <fullName evidence="1">PSII 4.8 kDa protein</fullName>
    </alternativeName>
</protein>
<name>PSBI_PANGI</name>
<organism>
    <name type="scientific">Panax ginseng</name>
    <name type="common">Korean ginseng</name>
    <dbReference type="NCBI Taxonomy" id="4054"/>
    <lineage>
        <taxon>Eukaryota</taxon>
        <taxon>Viridiplantae</taxon>
        <taxon>Streptophyta</taxon>
        <taxon>Embryophyta</taxon>
        <taxon>Tracheophyta</taxon>
        <taxon>Spermatophyta</taxon>
        <taxon>Magnoliopsida</taxon>
        <taxon>eudicotyledons</taxon>
        <taxon>Gunneridae</taxon>
        <taxon>Pentapetalae</taxon>
        <taxon>asterids</taxon>
        <taxon>campanulids</taxon>
        <taxon>Apiales</taxon>
        <taxon>Araliaceae</taxon>
        <taxon>Panax</taxon>
    </lineage>
</organism>
<reference key="1">
    <citation type="journal article" date="2004" name="DNA Res.">
        <title>Complete chloroplast genome sequence from Korea ginseng (Panax schinseng Nees) and comparative analysis of sequence evolution among 17 vascular plants.</title>
        <authorList>
            <person name="Kim K.-J."/>
            <person name="Lee H.-L."/>
        </authorList>
    </citation>
    <scope>NUCLEOTIDE SEQUENCE [LARGE SCALE GENOMIC DNA]</scope>
</reference>
<comment type="function">
    <text evidence="1">One of the components of the core complex of photosystem II (PSII), required for its stability and/or assembly. PSII is a light-driven water:plastoquinone oxidoreductase that uses light energy to abstract electrons from H(2)O, generating O(2) and a proton gradient subsequently used for ATP formation. It consists of a core antenna complex that captures photons, and an electron transfer chain that converts photonic excitation into a charge separation.</text>
</comment>
<comment type="subunit">
    <text evidence="1">PSII is composed of 1 copy each of membrane proteins PsbA, PsbB, PsbC, PsbD, PsbE, PsbF, PsbH, PsbI, PsbJ, PsbK, PsbL, PsbM, PsbT, PsbX, PsbY, PsbZ, Psb30/Ycf12, at least 3 peripheral proteins of the oxygen-evolving complex and a large number of cofactors. It forms dimeric complexes.</text>
</comment>
<comment type="subcellular location">
    <subcellularLocation>
        <location evidence="1">Plastid</location>
        <location evidence="1">Chloroplast thylakoid membrane</location>
        <topology evidence="1">Single-pass membrane protein</topology>
    </subcellularLocation>
</comment>
<comment type="similarity">
    <text evidence="1">Belongs to the PsbI family.</text>
</comment>
<feature type="chain" id="PRO_0000219643" description="Photosystem II reaction center protein I">
    <location>
        <begin position="1"/>
        <end position="36"/>
    </location>
</feature>
<feature type="transmembrane region" description="Helical" evidence="1">
    <location>
        <begin position="4"/>
        <end position="24"/>
    </location>
</feature>
<dbReference type="EMBL" id="AY582139">
    <property type="protein sequence ID" value="AAT98493.1"/>
    <property type="molecule type" value="Genomic_DNA"/>
</dbReference>
<dbReference type="RefSeq" id="YP_086950.1">
    <property type="nucleotide sequence ID" value="NC_006290.1"/>
</dbReference>
<dbReference type="SMR" id="Q68S22"/>
<dbReference type="GeneID" id="3021559"/>
<dbReference type="GO" id="GO:0009535">
    <property type="term" value="C:chloroplast thylakoid membrane"/>
    <property type="evidence" value="ECO:0007669"/>
    <property type="project" value="UniProtKB-SubCell"/>
</dbReference>
<dbReference type="GO" id="GO:0009539">
    <property type="term" value="C:photosystem II reaction center"/>
    <property type="evidence" value="ECO:0007669"/>
    <property type="project" value="InterPro"/>
</dbReference>
<dbReference type="GO" id="GO:0015979">
    <property type="term" value="P:photosynthesis"/>
    <property type="evidence" value="ECO:0007669"/>
    <property type="project" value="UniProtKB-UniRule"/>
</dbReference>
<dbReference type="HAMAP" id="MF_01316">
    <property type="entry name" value="PSII_PsbI"/>
    <property type="match status" value="1"/>
</dbReference>
<dbReference type="InterPro" id="IPR003686">
    <property type="entry name" value="PSII_PsbI"/>
</dbReference>
<dbReference type="InterPro" id="IPR037271">
    <property type="entry name" value="PSII_PsbI_sf"/>
</dbReference>
<dbReference type="NCBIfam" id="NF002735">
    <property type="entry name" value="PRK02655.1"/>
    <property type="match status" value="1"/>
</dbReference>
<dbReference type="PANTHER" id="PTHR35772">
    <property type="entry name" value="PHOTOSYSTEM II REACTION CENTER PROTEIN I"/>
    <property type="match status" value="1"/>
</dbReference>
<dbReference type="PANTHER" id="PTHR35772:SF1">
    <property type="entry name" value="PHOTOSYSTEM II REACTION CENTER PROTEIN I"/>
    <property type="match status" value="1"/>
</dbReference>
<dbReference type="Pfam" id="PF02532">
    <property type="entry name" value="PsbI"/>
    <property type="match status" value="1"/>
</dbReference>
<dbReference type="SUPFAM" id="SSF161041">
    <property type="entry name" value="Photosystem II reaction center protein I, PsbI"/>
    <property type="match status" value="1"/>
</dbReference>
<accession>Q68S22</accession>
<geneLocation type="chloroplast"/>